<comment type="function">
    <text evidence="1 6">Low affinity ammonium transporter of the plasma membrane (PubMed:24707045). May be involved in drug resistance through pumping them out of the cell (By similarity).</text>
</comment>
<comment type="subcellular location">
    <subcellularLocation>
        <location evidence="6">Cell membrane</location>
        <topology evidence="2">Multi-pass membrane protein</topology>
    </subcellularLocation>
</comment>
<comment type="induction">
    <text evidence="3 4 5 6">Expression is induced by neocarzinostatin (PubMed:11562456). Expression is induced during G2 phase of cell cycle (PubMed:16278933). Expression is slightly up-regulated upon exposure to boric acid (PubMed:19414602). The AMF1 promoter contains 8 predicted enhancer box (E-box) transcription factor binding domains (PubMed:24707045).</text>
</comment>
<comment type="disruption phenotype">
    <text evidence="5 6">Does not affect boron tolerance (PubMed:19414602). Impairs methylammonium (MA) transport and toxicity (PubMed:24707045).</text>
</comment>
<comment type="similarity">
    <text evidence="8">Belongs to the major facilitator superfamily.</text>
</comment>
<protein>
    <recommendedName>
        <fullName evidence="7">Low affinity ammonium transporter</fullName>
    </recommendedName>
    <alternativeName>
        <fullName evidence="7">Ammonium facilitator 1</fullName>
    </alternativeName>
</protein>
<sequence>MSTSSSVTQKNLDTNAEALKKEDKVLSEFDIQDERPKSLLWESAFVGVLCSAQLMTQAGLGQSLAPLHIIGNSFGTTNAGQLSWFASAYSLTVGTFILIAGRLGDIFGHKKFFVLGFFWYALWSLLAGFSVYSNQIFFDCCRAFQGMGPAFLLPNAIAILGRTYKPGRRKNMVFSLFGASAPGGFFLGAVFSSMLGQLAWWPWAYWIMGIACFVLAVAGYFVIPHTPMPSRDASSFKLLERIDFAGSVTGVVGLILFNFAWNQGPVVGWQTPYTYALLIVGTFFLVIFAYIESRAAFPLLPFAALSSDTAFVLSCIAAGWASFGIWIFYTWQFMEDSRGQTPLLSSAQFSPVAISGFCAAVTTGFLLSHTPPSTVMLFAMTAFTVGTILIATAPVHQTYWAQTFVSIIVMPWGMDMSFPAATIMLSDSMPHEHQGLAASLVNTVVNYSISIGLGIAGTIESRVNDGGAKPLKGYRCSWYMGIGLSGLGIFVAATYAWSTFMKSKKRISEKQHFIE</sequence>
<organism>
    <name type="scientific">Saccharomyces cerevisiae (strain ATCC 204508 / S288c)</name>
    <name type="common">Baker's yeast</name>
    <dbReference type="NCBI Taxonomy" id="559292"/>
    <lineage>
        <taxon>Eukaryota</taxon>
        <taxon>Fungi</taxon>
        <taxon>Dikarya</taxon>
        <taxon>Ascomycota</taxon>
        <taxon>Saccharomycotina</taxon>
        <taxon>Saccharomycetes</taxon>
        <taxon>Saccharomycetales</taxon>
        <taxon>Saccharomycetaceae</taxon>
        <taxon>Saccharomyces</taxon>
    </lineage>
</organism>
<feature type="chain" id="PRO_0000244476" description="Low affinity ammonium transporter">
    <location>
        <begin position="1"/>
        <end position="515"/>
    </location>
</feature>
<feature type="topological domain" description="Extracellular" evidence="2">
    <location>
        <begin position="1"/>
        <end position="78"/>
    </location>
</feature>
<feature type="transmembrane region" description="Helical" evidence="2">
    <location>
        <begin position="79"/>
        <end position="99"/>
    </location>
</feature>
<feature type="topological domain" description="Cytoplasmic" evidence="2">
    <location>
        <begin position="100"/>
        <end position="111"/>
    </location>
</feature>
<feature type="transmembrane region" description="Helical" evidence="2">
    <location>
        <begin position="112"/>
        <end position="132"/>
    </location>
</feature>
<feature type="topological domain" description="Extracellular" evidence="2">
    <location>
        <begin position="133"/>
        <end position="140"/>
    </location>
</feature>
<feature type="transmembrane region" description="Helical" evidence="2">
    <location>
        <begin position="141"/>
        <end position="161"/>
    </location>
</feature>
<feature type="topological domain" description="Cytoplasmic" evidence="2">
    <location>
        <begin position="162"/>
        <end position="171"/>
    </location>
</feature>
<feature type="transmembrane region" description="Helical" evidence="2">
    <location>
        <begin position="172"/>
        <end position="192"/>
    </location>
</feature>
<feature type="topological domain" description="Extracellular" evidence="2">
    <location>
        <begin position="193"/>
        <end position="202"/>
    </location>
</feature>
<feature type="transmembrane region" description="Helical" evidence="2">
    <location>
        <begin position="203"/>
        <end position="223"/>
    </location>
</feature>
<feature type="topological domain" description="Cytoplasmic" evidence="2">
    <location>
        <begin position="224"/>
        <end position="241"/>
    </location>
</feature>
<feature type="transmembrane region" description="Helical" evidence="2">
    <location>
        <begin position="242"/>
        <end position="262"/>
    </location>
</feature>
<feature type="topological domain" description="Extracellular" evidence="2">
    <location>
        <begin position="263"/>
        <end position="270"/>
    </location>
</feature>
<feature type="transmembrane region" description="Helical" evidence="2">
    <location>
        <begin position="271"/>
        <end position="291"/>
    </location>
</feature>
<feature type="topological domain" description="Cytoplasmic" evidence="2">
    <location>
        <begin position="292"/>
        <end position="310"/>
    </location>
</feature>
<feature type="transmembrane region" description="Helical" evidence="2">
    <location>
        <begin position="311"/>
        <end position="331"/>
    </location>
</feature>
<feature type="topological domain" description="Extracellular" evidence="2">
    <location>
        <begin position="332"/>
        <end position="346"/>
    </location>
</feature>
<feature type="transmembrane region" description="Helical" evidence="2">
    <location>
        <begin position="347"/>
        <end position="367"/>
    </location>
</feature>
<feature type="topological domain" description="Cytoplasmic" evidence="2">
    <location>
        <begin position="368"/>
        <end position="374"/>
    </location>
</feature>
<feature type="transmembrane region" description="Helical" evidence="2">
    <location>
        <begin position="375"/>
        <end position="395"/>
    </location>
</feature>
<feature type="topological domain" description="Extracellular" evidence="2">
    <location>
        <begin position="396"/>
        <end position="403"/>
    </location>
</feature>
<feature type="transmembrane region" description="Helical" evidence="2">
    <location>
        <begin position="404"/>
        <end position="424"/>
    </location>
</feature>
<feature type="topological domain" description="Cytoplasmic" evidence="2">
    <location>
        <begin position="425"/>
        <end position="435"/>
    </location>
</feature>
<feature type="transmembrane region" description="Helical" evidence="2">
    <location>
        <begin position="436"/>
        <end position="456"/>
    </location>
</feature>
<feature type="topological domain" description="Extracellular" evidence="2">
    <location>
        <begin position="457"/>
        <end position="479"/>
    </location>
</feature>
<feature type="transmembrane region" description="Helical" evidence="2">
    <location>
        <begin position="480"/>
        <end position="500"/>
    </location>
</feature>
<feature type="topological domain" description="Cytoplasmic" evidence="2">
    <location>
        <begin position="501"/>
        <end position="515"/>
    </location>
</feature>
<proteinExistence type="evidence at protein level"/>
<name>AMF1_YEAST</name>
<dbReference type="EMBL" id="Z75286">
    <property type="protein sequence ID" value="CAA99709.1"/>
    <property type="molecule type" value="Genomic_DNA"/>
</dbReference>
<dbReference type="EMBL" id="BK006948">
    <property type="protein sequence ID" value="DAA11137.1"/>
    <property type="molecule type" value="Genomic_DNA"/>
</dbReference>
<dbReference type="PIR" id="S67290">
    <property type="entry name" value="S67290"/>
</dbReference>
<dbReference type="RefSeq" id="NP_015023.1">
    <property type="nucleotide sequence ID" value="NM_001183798.1"/>
</dbReference>
<dbReference type="SMR" id="Q08902"/>
<dbReference type="BioGRID" id="34760">
    <property type="interactions" value="24"/>
</dbReference>
<dbReference type="DIP" id="DIP-4051N"/>
<dbReference type="FunCoup" id="Q08902">
    <property type="interactions" value="71"/>
</dbReference>
<dbReference type="IntAct" id="Q08902">
    <property type="interactions" value="1"/>
</dbReference>
<dbReference type="STRING" id="4932.YOR378W"/>
<dbReference type="TCDB" id="2.A.1.3.52">
    <property type="family name" value="the major facilitator superfamily (mfs)"/>
</dbReference>
<dbReference type="GlyGen" id="Q08902">
    <property type="glycosylation" value="1 site"/>
</dbReference>
<dbReference type="PaxDb" id="4932-YOR378W"/>
<dbReference type="PeptideAtlas" id="Q08902"/>
<dbReference type="EnsemblFungi" id="YOR378W_mRNA">
    <property type="protein sequence ID" value="YOR378W"/>
    <property type="gene ID" value="YOR378W"/>
</dbReference>
<dbReference type="GeneID" id="854560"/>
<dbReference type="KEGG" id="sce:YOR378W"/>
<dbReference type="AGR" id="SGD:S000005905"/>
<dbReference type="SGD" id="S000005905">
    <property type="gene designation" value="AMF1"/>
</dbReference>
<dbReference type="VEuPathDB" id="FungiDB:YOR378W"/>
<dbReference type="eggNOG" id="KOG0254">
    <property type="taxonomic scope" value="Eukaryota"/>
</dbReference>
<dbReference type="HOGENOM" id="CLU_000960_27_4_1"/>
<dbReference type="InParanoid" id="Q08902"/>
<dbReference type="OMA" id="LCMSIAP"/>
<dbReference type="OrthoDB" id="2130629at2759"/>
<dbReference type="BioCyc" id="YEAST:G3O-33842-MONOMER"/>
<dbReference type="BioGRID-ORCS" id="854560">
    <property type="hits" value="0 hits in 10 CRISPR screens"/>
</dbReference>
<dbReference type="PRO" id="PR:Q08902"/>
<dbReference type="Proteomes" id="UP000002311">
    <property type="component" value="Chromosome XV"/>
</dbReference>
<dbReference type="RNAct" id="Q08902">
    <property type="molecule type" value="protein"/>
</dbReference>
<dbReference type="GO" id="GO:0071944">
    <property type="term" value="C:cell periphery"/>
    <property type="evidence" value="ECO:0007005"/>
    <property type="project" value="SGD"/>
</dbReference>
<dbReference type="GO" id="GO:0016020">
    <property type="term" value="C:membrane"/>
    <property type="evidence" value="ECO:0000318"/>
    <property type="project" value="GO_Central"/>
</dbReference>
<dbReference type="GO" id="GO:0005886">
    <property type="term" value="C:plasma membrane"/>
    <property type="evidence" value="ECO:0000314"/>
    <property type="project" value="SGD"/>
</dbReference>
<dbReference type="GO" id="GO:0008519">
    <property type="term" value="F:ammonium channel activity"/>
    <property type="evidence" value="ECO:0000314"/>
    <property type="project" value="SGD"/>
</dbReference>
<dbReference type="GO" id="GO:0072488">
    <property type="term" value="P:ammonium transmembrane transport"/>
    <property type="evidence" value="ECO:0000316"/>
    <property type="project" value="SGD"/>
</dbReference>
<dbReference type="CDD" id="cd17476">
    <property type="entry name" value="MFS_Amf1_MDR_like"/>
    <property type="match status" value="1"/>
</dbReference>
<dbReference type="FunFam" id="1.20.1250.20:FF:000285">
    <property type="entry name" value="MFS general substrate transporter"/>
    <property type="match status" value="1"/>
</dbReference>
<dbReference type="FunFam" id="1.20.1250.20:FF:000294">
    <property type="entry name" value="MFS transporter of unkown specificity"/>
    <property type="match status" value="1"/>
</dbReference>
<dbReference type="Gene3D" id="1.20.1250.20">
    <property type="entry name" value="MFS general substrate transporter like domains"/>
    <property type="match status" value="2"/>
</dbReference>
<dbReference type="InterPro" id="IPR011701">
    <property type="entry name" value="MFS"/>
</dbReference>
<dbReference type="InterPro" id="IPR020846">
    <property type="entry name" value="MFS_dom"/>
</dbReference>
<dbReference type="InterPro" id="IPR036259">
    <property type="entry name" value="MFS_trans_sf"/>
</dbReference>
<dbReference type="PANTHER" id="PTHR42718:SF1">
    <property type="entry name" value="LOW AFFINITY AMMONIUM TRANSPORTER"/>
    <property type="match status" value="1"/>
</dbReference>
<dbReference type="PANTHER" id="PTHR42718">
    <property type="entry name" value="MAJOR FACILITATOR SUPERFAMILY MULTIDRUG TRANSPORTER MFSC"/>
    <property type="match status" value="1"/>
</dbReference>
<dbReference type="Pfam" id="PF07690">
    <property type="entry name" value="MFS_1"/>
    <property type="match status" value="2"/>
</dbReference>
<dbReference type="SUPFAM" id="SSF103473">
    <property type="entry name" value="MFS general substrate transporter"/>
    <property type="match status" value="1"/>
</dbReference>
<dbReference type="PROSITE" id="PS50850">
    <property type="entry name" value="MFS"/>
    <property type="match status" value="1"/>
</dbReference>
<reference key="1">
    <citation type="journal article" date="1997" name="Nature">
        <title>The nucleotide sequence of Saccharomyces cerevisiae chromosome XV.</title>
        <authorList>
            <person name="Dujon B."/>
            <person name="Albermann K."/>
            <person name="Aldea M."/>
            <person name="Alexandraki D."/>
            <person name="Ansorge W."/>
            <person name="Arino J."/>
            <person name="Benes V."/>
            <person name="Bohn C."/>
            <person name="Bolotin-Fukuhara M."/>
            <person name="Bordonne R."/>
            <person name="Boyer J."/>
            <person name="Camasses A."/>
            <person name="Casamayor A."/>
            <person name="Casas C."/>
            <person name="Cheret G."/>
            <person name="Cziepluch C."/>
            <person name="Daignan-Fornier B."/>
            <person name="Dang V.-D."/>
            <person name="de Haan M."/>
            <person name="Delius H."/>
            <person name="Durand P."/>
            <person name="Fairhead C."/>
            <person name="Feldmann H."/>
            <person name="Gaillon L."/>
            <person name="Galisson F."/>
            <person name="Gamo F.-J."/>
            <person name="Gancedo C."/>
            <person name="Goffeau A."/>
            <person name="Goulding S.E."/>
            <person name="Grivell L.A."/>
            <person name="Habbig B."/>
            <person name="Hand N.J."/>
            <person name="Hani J."/>
            <person name="Hattenhorst U."/>
            <person name="Hebling U."/>
            <person name="Hernando Y."/>
            <person name="Herrero E."/>
            <person name="Heumann K."/>
            <person name="Hiesel R."/>
            <person name="Hilger F."/>
            <person name="Hofmann B."/>
            <person name="Hollenberg C.P."/>
            <person name="Hughes B."/>
            <person name="Jauniaux J.-C."/>
            <person name="Kalogeropoulos A."/>
            <person name="Katsoulou C."/>
            <person name="Kordes E."/>
            <person name="Lafuente M.J."/>
            <person name="Landt O."/>
            <person name="Louis E.J."/>
            <person name="Maarse A.C."/>
            <person name="Madania A."/>
            <person name="Mannhaupt G."/>
            <person name="Marck C."/>
            <person name="Martin R.P."/>
            <person name="Mewes H.-W."/>
            <person name="Michaux G."/>
            <person name="Paces V."/>
            <person name="Parle-McDermott A.G."/>
            <person name="Pearson B.M."/>
            <person name="Perrin A."/>
            <person name="Pettersson B."/>
            <person name="Poch O."/>
            <person name="Pohl T.M."/>
            <person name="Poirey R."/>
            <person name="Portetelle D."/>
            <person name="Pujol A."/>
            <person name="Purnelle B."/>
            <person name="Ramezani Rad M."/>
            <person name="Rechmann S."/>
            <person name="Schwager C."/>
            <person name="Schweizer M."/>
            <person name="Sor F."/>
            <person name="Sterky F."/>
            <person name="Tarassov I.A."/>
            <person name="Teodoru C."/>
            <person name="Tettelin H."/>
            <person name="Thierry A."/>
            <person name="Tobiasch E."/>
            <person name="Tzermia M."/>
            <person name="Uhlen M."/>
            <person name="Unseld M."/>
            <person name="Valens M."/>
            <person name="Vandenbol M."/>
            <person name="Vetter I."/>
            <person name="Vlcek C."/>
            <person name="Voet M."/>
            <person name="Volckaert G."/>
            <person name="Voss H."/>
            <person name="Wambutt R."/>
            <person name="Wedler H."/>
            <person name="Wiemann S."/>
            <person name="Winsor B."/>
            <person name="Wolfe K.H."/>
            <person name="Zollner A."/>
            <person name="Zumstein E."/>
            <person name="Kleine K."/>
        </authorList>
    </citation>
    <scope>NUCLEOTIDE SEQUENCE [LARGE SCALE GENOMIC DNA]</scope>
    <source>
        <strain>ATCC 204508 / S288c</strain>
    </source>
</reference>
<reference key="2">
    <citation type="journal article" date="2014" name="G3 (Bethesda)">
        <title>The reference genome sequence of Saccharomyces cerevisiae: Then and now.</title>
        <authorList>
            <person name="Engel S.R."/>
            <person name="Dietrich F.S."/>
            <person name="Fisk D.G."/>
            <person name="Binkley G."/>
            <person name="Balakrishnan R."/>
            <person name="Costanzo M.C."/>
            <person name="Dwight S.S."/>
            <person name="Hitz B.C."/>
            <person name="Karra K."/>
            <person name="Nash R.S."/>
            <person name="Weng S."/>
            <person name="Wong E.D."/>
            <person name="Lloyd P."/>
            <person name="Skrzypek M.S."/>
            <person name="Miyasato S.R."/>
            <person name="Simison M."/>
            <person name="Cherry J.M."/>
        </authorList>
    </citation>
    <scope>GENOME REANNOTATION</scope>
    <source>
        <strain>ATCC 204508 / S288c</strain>
    </source>
</reference>
<reference key="3">
    <citation type="journal article" date="2001" name="Proc. Natl. Acad. Sci. U.S.A.">
        <title>Gene transcription analysis of Saccharomyces cerevisiae exposed to neocarzinostatin protein-chromophore complex reveals evidence of DNA damage, a potential mechanism of resistance, and consequences of prolonged exposure.</title>
        <authorList>
            <person name="Schaus S.E."/>
            <person name="Cavalieri D."/>
            <person name="Myers A.G."/>
        </authorList>
    </citation>
    <scope>INDUCTION BY NEOCARZINOSTATIN</scope>
</reference>
<reference key="4">
    <citation type="journal article" date="2005" name="Yeast">
        <title>New weakly expressed cell cycle-regulated genes in yeast.</title>
        <authorList>
            <person name="de Lichtenberg U."/>
            <person name="Wernersson R."/>
            <person name="Jensen T.S."/>
            <person name="Nielsen H.B."/>
            <person name="Fausboell A."/>
            <person name="Schmidt P."/>
            <person name="Hansen F.B."/>
            <person name="Knudsen S."/>
            <person name="Brunak S."/>
        </authorList>
    </citation>
    <scope>INDUCTION</scope>
</reference>
<reference key="5">
    <citation type="journal article" date="2006" name="FEMS Yeast Res.">
        <title>Evolution of gene families: the multidrug resistance transporter genes in five related yeast species.</title>
        <authorList>
            <person name="Gbelska Y."/>
            <person name="Krijger J.J."/>
            <person name="Breunig K.D."/>
        </authorList>
    </citation>
    <scope>IDENTIFICATION</scope>
</reference>
<reference key="6">
    <citation type="journal article" date="2006" name="Proc. Natl. Acad. Sci. U.S.A.">
        <title>A global topology map of the Saccharomyces cerevisiae membrane proteome.</title>
        <authorList>
            <person name="Kim H."/>
            <person name="Melen K."/>
            <person name="Oesterberg M."/>
            <person name="von Heijne G."/>
        </authorList>
    </citation>
    <scope>TOPOLOGY [LARGE SCALE ANALYSIS]</scope>
    <source>
        <strain>ATCC 208353 / W303-1A</strain>
    </source>
</reference>
<reference key="7">
    <citation type="journal article" date="2009" name="Mol. Cell. Biol.">
        <title>Identification of a novel system for boron transport: Atr1 is a main boron exporter in yeast.</title>
        <authorList>
            <person name="Kaya A."/>
            <person name="Karakaya H.C."/>
            <person name="Fomenko D.E."/>
            <person name="Gladyshev V.N."/>
            <person name="Koc A."/>
        </authorList>
    </citation>
    <scope>DISRUPTION PHENOTYPE</scope>
    <scope>INDUCTION</scope>
</reference>
<reference key="8">
    <citation type="journal article" date="2014" name="Proc. Natl. Acad. Sci. U.S.A.">
        <title>Soybean SAT1 (Symbiotic Ammonium Transporter 1) encodes a bHLH transcription factor involved in nodule growth and NH4+ transport.</title>
        <authorList>
            <person name="Chiasson D.M."/>
            <person name="Loughlin P.C."/>
            <person name="Mazurkiewicz D."/>
            <person name="Mohammadidehcheshmeh M."/>
            <person name="Fedorova E.E."/>
            <person name="Okamoto M."/>
            <person name="McLean E."/>
            <person name="Glass A.D."/>
            <person name="Smith S.E."/>
            <person name="Bisseling T."/>
            <person name="Tyerman S.D."/>
            <person name="Day D.A."/>
            <person name="Kaiser B.N."/>
        </authorList>
    </citation>
    <scope>SUBCELLULAR LOCATION</scope>
    <scope>DISRUPTION PHENOTYPE</scope>
    <scope>FUNCTION</scope>
    <scope>INDUCTION</scope>
</reference>
<keyword id="KW-0924">Ammonia transport</keyword>
<keyword id="KW-1003">Cell membrane</keyword>
<keyword id="KW-0472">Membrane</keyword>
<keyword id="KW-1185">Reference proteome</keyword>
<keyword id="KW-0812">Transmembrane</keyword>
<keyword id="KW-1133">Transmembrane helix</keyword>
<keyword id="KW-0813">Transport</keyword>
<accession>Q08902</accession>
<accession>D6W371</accession>
<gene>
    <name evidence="7" type="primary">AMF1</name>
    <name type="ordered locus">YOR378W</name>
</gene>
<evidence type="ECO:0000250" key="1">
    <source>
        <dbReference type="UniProtKB" id="P13090"/>
    </source>
</evidence>
<evidence type="ECO:0000255" key="2"/>
<evidence type="ECO:0000269" key="3">
    <source>
    </source>
</evidence>
<evidence type="ECO:0000269" key="4">
    <source>
    </source>
</evidence>
<evidence type="ECO:0000269" key="5">
    <source>
    </source>
</evidence>
<evidence type="ECO:0000269" key="6">
    <source>
    </source>
</evidence>
<evidence type="ECO:0000303" key="7">
    <source>
    </source>
</evidence>
<evidence type="ECO:0000305" key="8"/>